<sequence length="319" mass="35350">MGEEVKPEAKEAASAPQAVPAEEEEKKKDVAEEKKVAAEEEKPKEEEEPQPPPPPPPFILYVDLHCVGCAKKIERSILKIRGVEEVVMDMNENQVTIKGVLDPQAVCNKIKKKTKRMAKVLSPLPAAEGEPLPPIITSQVSGGLTTVELSVNMHCQACADQLKKKILKMRGVQTTVTEHTTGKVIVTGTMDAEKLVDYVYRRTKKQARIVPQPDPEPEAPAAAQEEKKEESGEGNEKPPETGEEKEEEKKKEGEENGEEGGGEEAAATEEERRDNEMTAMAQEEGMKRMMYYYQPSYVIERIPPPQLFSDENPNACCIS</sequence>
<proteinExistence type="evidence at transcript level"/>
<reference key="1">
    <citation type="journal article" date="1998" name="DNA Res.">
        <title>Structural analysis of Arabidopsis thaliana chromosome 5. IV. Sequence features of the regions of 1,456,315 bp covered by nineteen physically assigned P1 and TAC clones.</title>
        <authorList>
            <person name="Sato S."/>
            <person name="Kaneko T."/>
            <person name="Kotani H."/>
            <person name="Nakamura Y."/>
            <person name="Asamizu E."/>
            <person name="Miyajima N."/>
            <person name="Tabata S."/>
        </authorList>
    </citation>
    <scope>NUCLEOTIDE SEQUENCE [LARGE SCALE GENOMIC DNA]</scope>
    <source>
        <strain>cv. Columbia</strain>
    </source>
</reference>
<reference key="2">
    <citation type="journal article" date="2017" name="Plant J.">
        <title>Araport11: a complete reannotation of the Arabidopsis thaliana reference genome.</title>
        <authorList>
            <person name="Cheng C.Y."/>
            <person name="Krishnakumar V."/>
            <person name="Chan A.P."/>
            <person name="Thibaud-Nissen F."/>
            <person name="Schobel S."/>
            <person name="Town C.D."/>
        </authorList>
    </citation>
    <scope>GENOME REANNOTATION</scope>
    <source>
        <strain>cv. Columbia</strain>
    </source>
</reference>
<reference key="3">
    <citation type="journal article" date="2003" name="Science">
        <title>Empirical analysis of transcriptional activity in the Arabidopsis genome.</title>
        <authorList>
            <person name="Yamada K."/>
            <person name="Lim J."/>
            <person name="Dale J.M."/>
            <person name="Chen H."/>
            <person name="Shinn P."/>
            <person name="Palm C.J."/>
            <person name="Southwick A.M."/>
            <person name="Wu H.C."/>
            <person name="Kim C.J."/>
            <person name="Nguyen M."/>
            <person name="Pham P.K."/>
            <person name="Cheuk R.F."/>
            <person name="Karlin-Newmann G."/>
            <person name="Liu S.X."/>
            <person name="Lam B."/>
            <person name="Sakano H."/>
            <person name="Wu T."/>
            <person name="Yu G."/>
            <person name="Miranda M."/>
            <person name="Quach H.L."/>
            <person name="Tripp M."/>
            <person name="Chang C.H."/>
            <person name="Lee J.M."/>
            <person name="Toriumi M.J."/>
            <person name="Chan M.M."/>
            <person name="Tang C.C."/>
            <person name="Onodera C.S."/>
            <person name="Deng J.M."/>
            <person name="Akiyama K."/>
            <person name="Ansari Y."/>
            <person name="Arakawa T."/>
            <person name="Banh J."/>
            <person name="Banno F."/>
            <person name="Bowser L."/>
            <person name="Brooks S.Y."/>
            <person name="Carninci P."/>
            <person name="Chao Q."/>
            <person name="Choy N."/>
            <person name="Enju A."/>
            <person name="Goldsmith A.D."/>
            <person name="Gurjal M."/>
            <person name="Hansen N.F."/>
            <person name="Hayashizaki Y."/>
            <person name="Johnson-Hopson C."/>
            <person name="Hsuan V.W."/>
            <person name="Iida K."/>
            <person name="Karnes M."/>
            <person name="Khan S."/>
            <person name="Koesema E."/>
            <person name="Ishida J."/>
            <person name="Jiang P.X."/>
            <person name="Jones T."/>
            <person name="Kawai J."/>
            <person name="Kamiya A."/>
            <person name="Meyers C."/>
            <person name="Nakajima M."/>
            <person name="Narusaka M."/>
            <person name="Seki M."/>
            <person name="Sakurai T."/>
            <person name="Satou M."/>
            <person name="Tamse R."/>
            <person name="Vaysberg M."/>
            <person name="Wallender E.K."/>
            <person name="Wong C."/>
            <person name="Yamamura Y."/>
            <person name="Yuan S."/>
            <person name="Shinozaki K."/>
            <person name="Davis R.W."/>
            <person name="Theologis A."/>
            <person name="Ecker J.R."/>
        </authorList>
    </citation>
    <scope>NUCLEOTIDE SEQUENCE [LARGE SCALE MRNA]</scope>
    <source>
        <strain>cv. Columbia</strain>
    </source>
</reference>
<reference key="4">
    <citation type="journal article" date="2010" name="Metallomics">
        <title>Metallochaperone-like genes in Arabidopsis thaliana.</title>
        <authorList>
            <person name="Tehseen M."/>
            <person name="Cairns N."/>
            <person name="Sherson S."/>
            <person name="Cobbett C.S."/>
        </authorList>
    </citation>
    <scope>GENE FAMILY</scope>
    <scope>NOMENCLATURE</scope>
</reference>
<reference key="5">
    <citation type="journal article" date="2013" name="FEBS J.">
        <title>Heavy metal-associated isoprenylated plant protein (HIPP): characterization of a family of proteins exclusive to plants.</title>
        <authorList>
            <person name="de Abreu-Neto J.B."/>
            <person name="Turchetto-Zolet A.C."/>
            <person name="de Oliveira L.F."/>
            <person name="Zanettini M.H."/>
            <person name="Margis-Pinheiro M."/>
        </authorList>
    </citation>
    <scope>GENE FAMILY</scope>
    <scope>NOMENCLATURE</scope>
</reference>
<name>HIP9_ARATH</name>
<feature type="chain" id="PRO_0000437807" description="Heavy metal-associated isoprenylated plant protein 9">
    <location>
        <begin position="1"/>
        <end position="316"/>
    </location>
</feature>
<feature type="propeptide" id="PRO_0000437808" description="Removed in mature form" evidence="8">
    <location>
        <begin position="317"/>
        <end position="319"/>
    </location>
</feature>
<feature type="domain" description="HMA 1" evidence="4">
    <location>
        <begin position="55"/>
        <end position="118"/>
    </location>
</feature>
<feature type="domain" description="HMA 2" evidence="4">
    <location>
        <begin position="144"/>
        <end position="208"/>
    </location>
</feature>
<feature type="region of interest" description="Disordered" evidence="5">
    <location>
        <begin position="1"/>
        <end position="57"/>
    </location>
</feature>
<feature type="region of interest" description="Disordered" evidence="5">
    <location>
        <begin position="207"/>
        <end position="282"/>
    </location>
</feature>
<feature type="coiled-coil region" evidence="3">
    <location>
        <begin position="21"/>
        <end position="48"/>
    </location>
</feature>
<feature type="compositionally biased region" description="Basic and acidic residues" evidence="5">
    <location>
        <begin position="1"/>
        <end position="11"/>
    </location>
</feature>
<feature type="compositionally biased region" description="Basic and acidic residues" evidence="5">
    <location>
        <begin position="24"/>
        <end position="45"/>
    </location>
</feature>
<feature type="compositionally biased region" description="Basic and acidic residues" evidence="5">
    <location>
        <begin position="224"/>
        <end position="254"/>
    </location>
</feature>
<feature type="compositionally biased region" description="Acidic residues" evidence="5">
    <location>
        <begin position="255"/>
        <end position="268"/>
    </location>
</feature>
<feature type="binding site" evidence="4">
    <location>
        <position position="66"/>
    </location>
    <ligand>
        <name>a metal cation</name>
        <dbReference type="ChEBI" id="CHEBI:25213"/>
        <label>1</label>
    </ligand>
</feature>
<feature type="binding site" evidence="4">
    <location>
        <position position="69"/>
    </location>
    <ligand>
        <name>a metal cation</name>
        <dbReference type="ChEBI" id="CHEBI:25213"/>
        <label>1</label>
    </ligand>
</feature>
<feature type="binding site" evidence="4">
    <location>
        <position position="155"/>
    </location>
    <ligand>
        <name>a metal cation</name>
        <dbReference type="ChEBI" id="CHEBI:25213"/>
        <label>2</label>
    </ligand>
</feature>
<feature type="binding site" evidence="4">
    <location>
        <position position="158"/>
    </location>
    <ligand>
        <name>a metal cation</name>
        <dbReference type="ChEBI" id="CHEBI:25213"/>
        <label>2</label>
    </ligand>
</feature>
<feature type="modified residue" description="Cysteine methyl ester" evidence="2">
    <location>
        <position position="316"/>
    </location>
</feature>
<feature type="lipid moiety-binding region" description="S-farnesyl cysteine" evidence="2">
    <location>
        <position position="316"/>
    </location>
</feature>
<comment type="function">
    <text evidence="1">Heavy-metal-binding protein.</text>
</comment>
<comment type="alternative products">
    <event type="alternative splicing"/>
    <isoform>
        <id>Q9FLU5-1</id>
        <name>1</name>
        <sequence type="displayed"/>
    </isoform>
    <text evidence="8">A number of isoforms are produced. According to EST sequences.</text>
</comment>
<comment type="similarity">
    <text evidence="8">Belongs to the HIPP family.</text>
</comment>
<evidence type="ECO:0000250" key="1">
    <source>
        <dbReference type="UniProtKB" id="Q9LZF1"/>
    </source>
</evidence>
<evidence type="ECO:0000250" key="2">
    <source>
        <dbReference type="UniProtKB" id="Q9SZN7"/>
    </source>
</evidence>
<evidence type="ECO:0000255" key="3"/>
<evidence type="ECO:0000255" key="4">
    <source>
        <dbReference type="PROSITE-ProRule" id="PRU00280"/>
    </source>
</evidence>
<evidence type="ECO:0000256" key="5">
    <source>
        <dbReference type="SAM" id="MobiDB-lite"/>
    </source>
</evidence>
<evidence type="ECO:0000303" key="6">
    <source>
    </source>
</evidence>
<evidence type="ECO:0000303" key="7">
    <source>
    </source>
</evidence>
<evidence type="ECO:0000305" key="8"/>
<evidence type="ECO:0000312" key="9">
    <source>
        <dbReference type="Araport" id="AT5G24580"/>
    </source>
</evidence>
<evidence type="ECO:0000312" key="10">
    <source>
        <dbReference type="EMBL" id="BAB11210.1"/>
    </source>
</evidence>
<gene>
    <name evidence="6 7" type="primary">HIPP09</name>
    <name evidence="9" type="ordered locus">At5g24580</name>
    <name evidence="10" type="ORF">K18P6.11</name>
</gene>
<organism>
    <name type="scientific">Arabidopsis thaliana</name>
    <name type="common">Mouse-ear cress</name>
    <dbReference type="NCBI Taxonomy" id="3702"/>
    <lineage>
        <taxon>Eukaryota</taxon>
        <taxon>Viridiplantae</taxon>
        <taxon>Streptophyta</taxon>
        <taxon>Embryophyta</taxon>
        <taxon>Tracheophyta</taxon>
        <taxon>Spermatophyta</taxon>
        <taxon>Magnoliopsida</taxon>
        <taxon>eudicotyledons</taxon>
        <taxon>Gunneridae</taxon>
        <taxon>Pentapetalae</taxon>
        <taxon>rosids</taxon>
        <taxon>malvids</taxon>
        <taxon>Brassicales</taxon>
        <taxon>Brassicaceae</taxon>
        <taxon>Camelineae</taxon>
        <taxon>Arabidopsis</taxon>
    </lineage>
</organism>
<keyword id="KW-0025">Alternative splicing</keyword>
<keyword id="KW-0175">Coiled coil</keyword>
<keyword id="KW-0449">Lipoprotein</keyword>
<keyword id="KW-0479">Metal-binding</keyword>
<keyword id="KW-0488">Methylation</keyword>
<keyword id="KW-0636">Prenylation</keyword>
<keyword id="KW-1185">Reference proteome</keyword>
<keyword id="KW-0677">Repeat</keyword>
<accession>Q9FLU5</accession>
<dbReference type="EMBL" id="AB010068">
    <property type="protein sequence ID" value="BAB11210.1"/>
    <property type="molecule type" value="Genomic_DNA"/>
</dbReference>
<dbReference type="EMBL" id="CP002688">
    <property type="protein sequence ID" value="AED93327.1"/>
    <property type="molecule type" value="Genomic_DNA"/>
</dbReference>
<dbReference type="EMBL" id="CP002688">
    <property type="protein sequence ID" value="ANM70314.1"/>
    <property type="molecule type" value="Genomic_DNA"/>
</dbReference>
<dbReference type="EMBL" id="AY072071">
    <property type="protein sequence ID" value="AAL59894.1"/>
    <property type="molecule type" value="mRNA"/>
</dbReference>
<dbReference type="EMBL" id="AY133835">
    <property type="protein sequence ID" value="AAM91769.1"/>
    <property type="molecule type" value="mRNA"/>
</dbReference>
<dbReference type="RefSeq" id="NP_001331936.1">
    <molecule id="Q9FLU5-1"/>
    <property type="nucleotide sequence ID" value="NM_001343881.1"/>
</dbReference>
<dbReference type="RefSeq" id="NP_568449.1">
    <molecule id="Q9FLU5-1"/>
    <property type="nucleotide sequence ID" value="NM_122366.4"/>
</dbReference>
<dbReference type="SMR" id="Q9FLU5"/>
<dbReference type="FunCoup" id="Q9FLU5">
    <property type="interactions" value="78"/>
</dbReference>
<dbReference type="STRING" id="3702.Q9FLU5"/>
<dbReference type="PaxDb" id="3702-AT5G24580.1"/>
<dbReference type="EnsemblPlants" id="AT5G24580.1">
    <molecule id="Q9FLU5-1"/>
    <property type="protein sequence ID" value="AT5G24580.1"/>
    <property type="gene ID" value="AT5G24580"/>
</dbReference>
<dbReference type="EnsemblPlants" id="AT5G24580.4">
    <molecule id="Q9FLU5-1"/>
    <property type="protein sequence ID" value="AT5G24580.4"/>
    <property type="gene ID" value="AT5G24580"/>
</dbReference>
<dbReference type="GeneID" id="832529"/>
<dbReference type="Gramene" id="AT5G24580.1">
    <molecule id="Q9FLU5-1"/>
    <property type="protein sequence ID" value="AT5G24580.1"/>
    <property type="gene ID" value="AT5G24580"/>
</dbReference>
<dbReference type="Gramene" id="AT5G24580.4">
    <molecule id="Q9FLU5-1"/>
    <property type="protein sequence ID" value="AT5G24580.4"/>
    <property type="gene ID" value="AT5G24580"/>
</dbReference>
<dbReference type="KEGG" id="ath:AT5G24580"/>
<dbReference type="Araport" id="AT5G24580"/>
<dbReference type="TAIR" id="AT5G24580">
    <property type="gene designation" value="HIPP09"/>
</dbReference>
<dbReference type="eggNOG" id="KOG1603">
    <property type="taxonomic scope" value="Eukaryota"/>
</dbReference>
<dbReference type="InParanoid" id="Q9FLU5"/>
<dbReference type="OMA" id="TGCARRM"/>
<dbReference type="PhylomeDB" id="Q9FLU5"/>
<dbReference type="PRO" id="PR:Q9FLU5"/>
<dbReference type="Proteomes" id="UP000006548">
    <property type="component" value="Chromosome 5"/>
</dbReference>
<dbReference type="ExpressionAtlas" id="Q9FLU5">
    <property type="expression patterns" value="baseline and differential"/>
</dbReference>
<dbReference type="GO" id="GO:0046872">
    <property type="term" value="F:metal ion binding"/>
    <property type="evidence" value="ECO:0007669"/>
    <property type="project" value="UniProtKB-KW"/>
</dbReference>
<dbReference type="CDD" id="cd00371">
    <property type="entry name" value="HMA"/>
    <property type="match status" value="2"/>
</dbReference>
<dbReference type="Gene3D" id="3.30.70.100">
    <property type="match status" value="2"/>
</dbReference>
<dbReference type="InterPro" id="IPR044258">
    <property type="entry name" value="HIPP09-like"/>
</dbReference>
<dbReference type="InterPro" id="IPR006121">
    <property type="entry name" value="HMA_dom"/>
</dbReference>
<dbReference type="InterPro" id="IPR036163">
    <property type="entry name" value="HMA_dom_sf"/>
</dbReference>
<dbReference type="PANTHER" id="PTHR47066">
    <property type="entry name" value="HEAVY METAL-ASSOCIATED ISOPRENYLATED PLANT PROTEIN 9"/>
    <property type="match status" value="1"/>
</dbReference>
<dbReference type="PANTHER" id="PTHR47066:SF1">
    <property type="entry name" value="HEAVY METAL-ASSOCIATED ISOPRENYLATED PLANT PROTEIN 9"/>
    <property type="match status" value="1"/>
</dbReference>
<dbReference type="Pfam" id="PF00403">
    <property type="entry name" value="HMA"/>
    <property type="match status" value="2"/>
</dbReference>
<dbReference type="SUPFAM" id="SSF55008">
    <property type="entry name" value="HMA, heavy metal-associated domain"/>
    <property type="match status" value="2"/>
</dbReference>
<dbReference type="PROSITE" id="PS50846">
    <property type="entry name" value="HMA_2"/>
    <property type="match status" value="2"/>
</dbReference>
<protein>
    <recommendedName>
        <fullName evidence="6 7">Heavy metal-associated isoprenylated plant protein 9</fullName>
        <shortName evidence="6 7">AtHIP09</shortName>
    </recommendedName>
</protein>